<comment type="function">
    <text evidence="1">This protein is involved in the repair of mismatches in DNA. It is required for dam-dependent methyl-directed DNA mismatch repair. May act as a 'molecular matchmaker', a protein that promotes the formation of a stable complex between two or more DNA-binding proteins in an ATP-dependent manner without itself being part of a final effector complex.</text>
</comment>
<comment type="similarity">
    <text evidence="1">Belongs to the DNA mismatch repair MutL/HexB family.</text>
</comment>
<comment type="sequence caution" evidence="2">
    <conflict type="erroneous initiation">
        <sequence resource="EMBL-CDS" id="AAO90596"/>
    </conflict>
</comment>
<feature type="chain" id="PRO_1000010011" description="DNA mismatch repair protein MutL">
    <location>
        <begin position="1"/>
        <end position="574"/>
    </location>
</feature>
<sequence length="574" mass="64586">MYIRRLNDQTANQIAAGEVVERPASVVKELIENSIDAHASCIRVDILQGGAKQIRIQDDGDGIHPEDLVLALERHATSKIAKIDDLQDITTLGFRGEALASISAVSRLTLTSRQKNAEMGYRISNISHKIMTPVPAAHPQGTTIDVQDLFYNTPARRKFLRSPATEFQHIRRIIERLALSHFTTEFLLHHNEKEIIHFKSATTISGQENRIKSILGDVFMQSALAIEFSQSGLTLKGYIAEAAYTRSQPDLQYIYVNGRFVRDKLVAQALRQAYHDVLFHGRHPAYVLYLEIDPAFVDINVHPTKHEVRFRDPQWVRDFLIHAVKTALAQAKPGIVHPLPQSTAEYNPITNFAPTPLIEGQGNLSLIQEQPAPYTQTIVHKHPLGHALAQLQGIYILSQNEKGLVIVDMHAAHERILYEKMKKQLAEVGLAMQSLLVPINLSLNPQEITAWQTNKALFARLGFEIESFGPDKIVVRRHPSLLKPKNLENLIRDVLADLITHNTTSRVGERINAALATLACHAALRAPHYLTIEEMEALLREMEKTEHGGLCNHGRPTWKQFDIAELDTFFLRGQ</sequence>
<accession>Q83CM9</accession>
<keyword id="KW-0227">DNA damage</keyword>
<keyword id="KW-0234">DNA repair</keyword>
<keyword id="KW-1185">Reference proteome</keyword>
<gene>
    <name evidence="1" type="primary">mutL</name>
    <name type="ordered locus">CBU_1083</name>
</gene>
<proteinExistence type="inferred from homology"/>
<organism>
    <name type="scientific">Coxiella burnetii (strain RSA 493 / Nine Mile phase I)</name>
    <dbReference type="NCBI Taxonomy" id="227377"/>
    <lineage>
        <taxon>Bacteria</taxon>
        <taxon>Pseudomonadati</taxon>
        <taxon>Pseudomonadota</taxon>
        <taxon>Gammaproteobacteria</taxon>
        <taxon>Legionellales</taxon>
        <taxon>Coxiellaceae</taxon>
        <taxon>Coxiella</taxon>
    </lineage>
</organism>
<name>MUTL_COXBU</name>
<protein>
    <recommendedName>
        <fullName evidence="1">DNA mismatch repair protein MutL</fullName>
    </recommendedName>
</protein>
<dbReference type="EMBL" id="AE016828">
    <property type="protein sequence ID" value="AAO90596.2"/>
    <property type="status" value="ALT_INIT"/>
    <property type="molecule type" value="Genomic_DNA"/>
</dbReference>
<dbReference type="RefSeq" id="NP_820082.2">
    <property type="nucleotide sequence ID" value="NC_002971.3"/>
</dbReference>
<dbReference type="RefSeq" id="WP_010957996.1">
    <property type="nucleotide sequence ID" value="NC_002971.4"/>
</dbReference>
<dbReference type="SMR" id="Q83CM9"/>
<dbReference type="STRING" id="227377.CBU_1083"/>
<dbReference type="EnsemblBacteria" id="AAO90596">
    <property type="protein sequence ID" value="AAO90596"/>
    <property type="gene ID" value="CBU_1083"/>
</dbReference>
<dbReference type="GeneID" id="1208984"/>
<dbReference type="KEGG" id="cbu:CBU_1083"/>
<dbReference type="PATRIC" id="fig|227377.7.peg.1077"/>
<dbReference type="eggNOG" id="COG0323">
    <property type="taxonomic scope" value="Bacteria"/>
</dbReference>
<dbReference type="HOGENOM" id="CLU_004131_4_2_6"/>
<dbReference type="OrthoDB" id="9763467at2"/>
<dbReference type="Proteomes" id="UP000002671">
    <property type="component" value="Chromosome"/>
</dbReference>
<dbReference type="GO" id="GO:0032300">
    <property type="term" value="C:mismatch repair complex"/>
    <property type="evidence" value="ECO:0000318"/>
    <property type="project" value="GO_Central"/>
</dbReference>
<dbReference type="GO" id="GO:0005524">
    <property type="term" value="F:ATP binding"/>
    <property type="evidence" value="ECO:0007669"/>
    <property type="project" value="InterPro"/>
</dbReference>
<dbReference type="GO" id="GO:0016887">
    <property type="term" value="F:ATP hydrolysis activity"/>
    <property type="evidence" value="ECO:0000318"/>
    <property type="project" value="GO_Central"/>
</dbReference>
<dbReference type="GO" id="GO:0140664">
    <property type="term" value="F:ATP-dependent DNA damage sensor activity"/>
    <property type="evidence" value="ECO:0007669"/>
    <property type="project" value="InterPro"/>
</dbReference>
<dbReference type="GO" id="GO:0030983">
    <property type="term" value="F:mismatched DNA binding"/>
    <property type="evidence" value="ECO:0007669"/>
    <property type="project" value="InterPro"/>
</dbReference>
<dbReference type="GO" id="GO:0006298">
    <property type="term" value="P:mismatch repair"/>
    <property type="evidence" value="ECO:0000318"/>
    <property type="project" value="GO_Central"/>
</dbReference>
<dbReference type="CDD" id="cd16926">
    <property type="entry name" value="HATPase_MutL-MLH-PMS-like"/>
    <property type="match status" value="1"/>
</dbReference>
<dbReference type="CDD" id="cd03482">
    <property type="entry name" value="MutL_Trans_MutL"/>
    <property type="match status" value="1"/>
</dbReference>
<dbReference type="FunFam" id="3.30.230.10:FF:000013">
    <property type="entry name" value="DNA mismatch repair endonuclease MutL"/>
    <property type="match status" value="1"/>
</dbReference>
<dbReference type="FunFam" id="3.30.565.10:FF:000003">
    <property type="entry name" value="DNA mismatch repair endonuclease MutL"/>
    <property type="match status" value="1"/>
</dbReference>
<dbReference type="Gene3D" id="3.30.230.10">
    <property type="match status" value="1"/>
</dbReference>
<dbReference type="Gene3D" id="3.30.565.10">
    <property type="entry name" value="Histidine kinase-like ATPase, C-terminal domain"/>
    <property type="match status" value="1"/>
</dbReference>
<dbReference type="Gene3D" id="3.30.1540.20">
    <property type="entry name" value="MutL, C-terminal domain, dimerisation subdomain"/>
    <property type="match status" value="1"/>
</dbReference>
<dbReference type="Gene3D" id="3.30.1370.100">
    <property type="entry name" value="MutL, C-terminal domain, regulatory subdomain"/>
    <property type="match status" value="1"/>
</dbReference>
<dbReference type="HAMAP" id="MF_00149">
    <property type="entry name" value="DNA_mis_repair"/>
    <property type="match status" value="1"/>
</dbReference>
<dbReference type="InterPro" id="IPR014762">
    <property type="entry name" value="DNA_mismatch_repair_CS"/>
</dbReference>
<dbReference type="InterPro" id="IPR020667">
    <property type="entry name" value="DNA_mismatch_repair_MutL"/>
</dbReference>
<dbReference type="InterPro" id="IPR013507">
    <property type="entry name" value="DNA_mismatch_S5_2-like"/>
</dbReference>
<dbReference type="InterPro" id="IPR036890">
    <property type="entry name" value="HATPase_C_sf"/>
</dbReference>
<dbReference type="InterPro" id="IPR002099">
    <property type="entry name" value="MutL/Mlh/PMS"/>
</dbReference>
<dbReference type="InterPro" id="IPR038973">
    <property type="entry name" value="MutL/Mlh/Pms-like"/>
</dbReference>
<dbReference type="InterPro" id="IPR014790">
    <property type="entry name" value="MutL_C"/>
</dbReference>
<dbReference type="InterPro" id="IPR042120">
    <property type="entry name" value="MutL_C_dimsub"/>
</dbReference>
<dbReference type="InterPro" id="IPR042121">
    <property type="entry name" value="MutL_C_regsub"/>
</dbReference>
<dbReference type="InterPro" id="IPR037198">
    <property type="entry name" value="MutL_C_sf"/>
</dbReference>
<dbReference type="InterPro" id="IPR020568">
    <property type="entry name" value="Ribosomal_Su5_D2-typ_SF"/>
</dbReference>
<dbReference type="InterPro" id="IPR014721">
    <property type="entry name" value="Ribsml_uS5_D2-typ_fold_subgr"/>
</dbReference>
<dbReference type="NCBIfam" id="TIGR00585">
    <property type="entry name" value="mutl"/>
    <property type="match status" value="1"/>
</dbReference>
<dbReference type="PANTHER" id="PTHR10073">
    <property type="entry name" value="DNA MISMATCH REPAIR PROTEIN MLH, PMS, MUTL"/>
    <property type="match status" value="1"/>
</dbReference>
<dbReference type="PANTHER" id="PTHR10073:SF12">
    <property type="entry name" value="DNA MISMATCH REPAIR PROTEIN MLH1"/>
    <property type="match status" value="1"/>
</dbReference>
<dbReference type="Pfam" id="PF01119">
    <property type="entry name" value="DNA_mis_repair"/>
    <property type="match status" value="1"/>
</dbReference>
<dbReference type="Pfam" id="PF13589">
    <property type="entry name" value="HATPase_c_3"/>
    <property type="match status" value="1"/>
</dbReference>
<dbReference type="Pfam" id="PF08676">
    <property type="entry name" value="MutL_C"/>
    <property type="match status" value="1"/>
</dbReference>
<dbReference type="SMART" id="SM01340">
    <property type="entry name" value="DNA_mis_repair"/>
    <property type="match status" value="1"/>
</dbReference>
<dbReference type="SMART" id="SM00853">
    <property type="entry name" value="MutL_C"/>
    <property type="match status" value="1"/>
</dbReference>
<dbReference type="SUPFAM" id="SSF55874">
    <property type="entry name" value="ATPase domain of HSP90 chaperone/DNA topoisomerase II/histidine kinase"/>
    <property type="match status" value="1"/>
</dbReference>
<dbReference type="SUPFAM" id="SSF118116">
    <property type="entry name" value="DNA mismatch repair protein MutL"/>
    <property type="match status" value="1"/>
</dbReference>
<dbReference type="SUPFAM" id="SSF54211">
    <property type="entry name" value="Ribosomal protein S5 domain 2-like"/>
    <property type="match status" value="1"/>
</dbReference>
<dbReference type="PROSITE" id="PS00058">
    <property type="entry name" value="DNA_MISMATCH_REPAIR_1"/>
    <property type="match status" value="1"/>
</dbReference>
<evidence type="ECO:0000255" key="1">
    <source>
        <dbReference type="HAMAP-Rule" id="MF_00149"/>
    </source>
</evidence>
<evidence type="ECO:0000305" key="2"/>
<reference key="1">
    <citation type="journal article" date="2003" name="Proc. Natl. Acad. Sci. U.S.A.">
        <title>Complete genome sequence of the Q-fever pathogen, Coxiella burnetii.</title>
        <authorList>
            <person name="Seshadri R."/>
            <person name="Paulsen I.T."/>
            <person name="Eisen J.A."/>
            <person name="Read T.D."/>
            <person name="Nelson K.E."/>
            <person name="Nelson W.C."/>
            <person name="Ward N.L."/>
            <person name="Tettelin H."/>
            <person name="Davidsen T.M."/>
            <person name="Beanan M.J."/>
            <person name="DeBoy R.T."/>
            <person name="Daugherty S.C."/>
            <person name="Brinkac L.M."/>
            <person name="Madupu R."/>
            <person name="Dodson R.J."/>
            <person name="Khouri H.M."/>
            <person name="Lee K.H."/>
            <person name="Carty H.A."/>
            <person name="Scanlan D."/>
            <person name="Heinzen R.A."/>
            <person name="Thompson H.A."/>
            <person name="Samuel J.E."/>
            <person name="Fraser C.M."/>
            <person name="Heidelberg J.F."/>
        </authorList>
    </citation>
    <scope>NUCLEOTIDE SEQUENCE [LARGE SCALE GENOMIC DNA]</scope>
    <source>
        <strain>RSA 493 / Nine Mile phase I</strain>
    </source>
</reference>